<proteinExistence type="evidence at transcript level"/>
<comment type="function">
    <text evidence="2 3 4">Cupin-domain-containing oxidoreductase; part of the gene cluster that mediates the biosynthesis of sordarial, a salicylic aldehyde structurally related to the phytotoxin pyriculol (PubMed:19277664, PubMed:28485098, PubMed:30908040). The most interesting aspect of this pathway is formation of an aromatic product from the highly reducing polyketide synthase srdA (PubMed:30908040). SrdA synthesizes a reduced polyketide chain from one molecule of acetyl-CoA and five molecules of malonyl-CoA (PubMed:30908040). The polyketide chain is then reductively released as an aldehyde (PubMed:30908040). The oxidoreductases srdC, srdD and srdE then oxidize one of the hydroxy groups to facilitate the intramolecular aldol condensation, followed by dehydration to yield a salicylic aldehyde (PubMed:30908040). This aldehyde can undergo facile reduction by endogenous reductases to yield the alcohol 1-hydroxy-2-hydroxymethyl-3-pent-1,3-dienylbenzene (PubMed:30908040). The flavin-dependent srdI counteract against the propensity of the aldehydes to be reduced under physiological conditions and is responsible for reoxidizing 1-hydroxy-2-hydroxymethyl-3-pent-1,3-dienylbenzene back to the salicylic aldehyde (PubMed:30908040). This salicylic aldehyde is then selectively epoxidized by the cupin-domain-containing oxidoreductase srdB to yield the epoxide, which can be hydrolyzed stereoselectively by the hydrolase srdG to give the final product sordarial (PubMed:30908040).</text>
</comment>
<comment type="induction">
    <text evidence="2 3">Expression is up-regulated during sexual development (PubMed:19277664). Expression is also up-regulated during confrontation with the arthropod fungivore Drosophila melanogaster (PubMed:28485098).</text>
</comment>
<comment type="similarity">
    <text evidence="6">Belongs to the virC family.</text>
</comment>
<comment type="caution">
    <text evidence="3 4">A recent genetics report associated srdA and its cluster with the biosynthesis of furanocoumarin neurosporin A, a metabolite produced by N.crassa for chemoresistance against predation by arthropod fungivores (PubMed:28485098). However, based on the gene cluster organization and predicted gene functions, this cluster is unlikely to be involved in neurosporin A biosynthesis, but instead produces compounds similar to pyriculol (PubMed:30908040).</text>
</comment>
<dbReference type="EC" id="1.-.-.-" evidence="7"/>
<dbReference type="EMBL" id="CM002236">
    <property type="protein sequence ID" value="EAA36365.1"/>
    <property type="molecule type" value="Genomic_DNA"/>
</dbReference>
<dbReference type="RefSeq" id="XP_965601.1">
    <property type="nucleotide sequence ID" value="XM_960508.2"/>
</dbReference>
<dbReference type="SMR" id="Q7SHI5"/>
<dbReference type="PaxDb" id="5141-EFNCRP00000002373"/>
<dbReference type="EnsemblFungi" id="EAA36365">
    <property type="protein sequence ID" value="EAA36365"/>
    <property type="gene ID" value="NCU02919"/>
</dbReference>
<dbReference type="GeneID" id="3881726"/>
<dbReference type="KEGG" id="ncr:NCU02919"/>
<dbReference type="VEuPathDB" id="FungiDB:NCU02919"/>
<dbReference type="HOGENOM" id="CLU_096188_0_2_1"/>
<dbReference type="InParanoid" id="Q7SHI5"/>
<dbReference type="OMA" id="FDMGYLM"/>
<dbReference type="OrthoDB" id="5840532at2759"/>
<dbReference type="Proteomes" id="UP000001805">
    <property type="component" value="Chromosome 1, Linkage Group I"/>
</dbReference>
<dbReference type="GO" id="GO:0016491">
    <property type="term" value="F:oxidoreductase activity"/>
    <property type="evidence" value="ECO:0007669"/>
    <property type="project" value="UniProtKB-KW"/>
</dbReference>
<dbReference type="CDD" id="cd02231">
    <property type="entry name" value="cupin_BLL6423-like"/>
    <property type="match status" value="1"/>
</dbReference>
<dbReference type="Gene3D" id="2.60.120.10">
    <property type="entry name" value="Jelly Rolls"/>
    <property type="match status" value="1"/>
</dbReference>
<dbReference type="InterPro" id="IPR013096">
    <property type="entry name" value="Cupin_2"/>
</dbReference>
<dbReference type="InterPro" id="IPR047142">
    <property type="entry name" value="OryJ/VirC-like"/>
</dbReference>
<dbReference type="InterPro" id="IPR014710">
    <property type="entry name" value="RmlC-like_jellyroll"/>
</dbReference>
<dbReference type="InterPro" id="IPR011051">
    <property type="entry name" value="RmlC_Cupin_sf"/>
</dbReference>
<dbReference type="PANTHER" id="PTHR36156:SF2">
    <property type="entry name" value="CUPIN TYPE-2 DOMAIN-CONTAINING PROTEIN"/>
    <property type="match status" value="1"/>
</dbReference>
<dbReference type="PANTHER" id="PTHR36156">
    <property type="entry name" value="SLR2101 PROTEIN"/>
    <property type="match status" value="1"/>
</dbReference>
<dbReference type="Pfam" id="PF07883">
    <property type="entry name" value="Cupin_2"/>
    <property type="match status" value="1"/>
</dbReference>
<dbReference type="SUPFAM" id="SSF51182">
    <property type="entry name" value="RmlC-like cupins"/>
    <property type="match status" value="1"/>
</dbReference>
<keyword id="KW-0560">Oxidoreductase</keyword>
<keyword id="KW-1185">Reference proteome</keyword>
<sequence>MSTSGPITEFPAPGLRDPFRYITGHDAEGNAVFVQTDNGDHRAVMLGGAAAQNIIYSAGSNPIELTGNVDLEFAKNRPSLHIPNGVCVRMIDFAPGCKSNMHRALCMGIGTVCEGEVELTLGSGEKRILRPGDVSINRGAMHQWRNTSDEKPARMLYTLLDIKPLIVNGKQLDFDMGYLMKEYAEYDEGEGDKKAE</sequence>
<organism>
    <name type="scientific">Neurospora crassa (strain ATCC 24698 / 74-OR23-1A / CBS 708.71 / DSM 1257 / FGSC 987)</name>
    <dbReference type="NCBI Taxonomy" id="367110"/>
    <lineage>
        <taxon>Eukaryota</taxon>
        <taxon>Fungi</taxon>
        <taxon>Dikarya</taxon>
        <taxon>Ascomycota</taxon>
        <taxon>Pezizomycotina</taxon>
        <taxon>Sordariomycetes</taxon>
        <taxon>Sordariomycetidae</taxon>
        <taxon>Sordariales</taxon>
        <taxon>Sordariaceae</taxon>
        <taxon>Neurospora</taxon>
    </lineage>
</organism>
<name>SRDB_NEUCR</name>
<gene>
    <name evidence="5" type="primary">srdB</name>
    <name type="ORF">NCU02919</name>
</gene>
<reference key="1">
    <citation type="journal article" date="2003" name="Nature">
        <title>The genome sequence of the filamentous fungus Neurospora crassa.</title>
        <authorList>
            <person name="Galagan J.E."/>
            <person name="Calvo S.E."/>
            <person name="Borkovich K.A."/>
            <person name="Selker E.U."/>
            <person name="Read N.D."/>
            <person name="Jaffe D.B."/>
            <person name="FitzHugh W."/>
            <person name="Ma L.-J."/>
            <person name="Smirnov S."/>
            <person name="Purcell S."/>
            <person name="Rehman B."/>
            <person name="Elkins T."/>
            <person name="Engels R."/>
            <person name="Wang S."/>
            <person name="Nielsen C.B."/>
            <person name="Butler J."/>
            <person name="Endrizzi M."/>
            <person name="Qui D."/>
            <person name="Ianakiev P."/>
            <person name="Bell-Pedersen D."/>
            <person name="Nelson M.A."/>
            <person name="Werner-Washburne M."/>
            <person name="Selitrennikoff C.P."/>
            <person name="Kinsey J.A."/>
            <person name="Braun E.L."/>
            <person name="Zelter A."/>
            <person name="Schulte U."/>
            <person name="Kothe G.O."/>
            <person name="Jedd G."/>
            <person name="Mewes H.-W."/>
            <person name="Staben C."/>
            <person name="Marcotte E."/>
            <person name="Greenberg D."/>
            <person name="Roy A."/>
            <person name="Foley K."/>
            <person name="Naylor J."/>
            <person name="Stange-Thomann N."/>
            <person name="Barrett R."/>
            <person name="Gnerre S."/>
            <person name="Kamal M."/>
            <person name="Kamvysselis M."/>
            <person name="Mauceli E.W."/>
            <person name="Bielke C."/>
            <person name="Rudd S."/>
            <person name="Frishman D."/>
            <person name="Krystofova S."/>
            <person name="Rasmussen C."/>
            <person name="Metzenberg R.L."/>
            <person name="Perkins D.D."/>
            <person name="Kroken S."/>
            <person name="Cogoni C."/>
            <person name="Macino G."/>
            <person name="Catcheside D.E.A."/>
            <person name="Li W."/>
            <person name="Pratt R.J."/>
            <person name="Osmani S.A."/>
            <person name="DeSouza C.P.C."/>
            <person name="Glass N.L."/>
            <person name="Orbach M.J."/>
            <person name="Berglund J.A."/>
            <person name="Voelker R."/>
            <person name="Yarden O."/>
            <person name="Plamann M."/>
            <person name="Seiler S."/>
            <person name="Dunlap J.C."/>
            <person name="Radford A."/>
            <person name="Aramayo R."/>
            <person name="Natvig D.O."/>
            <person name="Alex L.A."/>
            <person name="Mannhaupt G."/>
            <person name="Ebbole D.J."/>
            <person name="Freitag M."/>
            <person name="Paulsen I."/>
            <person name="Sachs M.S."/>
            <person name="Lander E.S."/>
            <person name="Nusbaum C."/>
            <person name="Birren B.W."/>
        </authorList>
    </citation>
    <scope>NUCLEOTIDE SEQUENCE [LARGE SCALE GENOMIC DNA]</scope>
    <source>
        <strain>ATCC 24698 / 74-OR23-1A / CBS 708.71 / DSM 1257 / FGSC 987</strain>
    </source>
</reference>
<reference key="2">
    <citation type="journal article" date="2009" name="Curr. Genet.">
        <title>A novel polyketide biosynthesis gene cluster is involved in fruiting body morphogenesis in the filamentous fungi Sordaria macrospora and Neurospora crassa.</title>
        <authorList>
            <person name="Nowrousian M."/>
        </authorList>
    </citation>
    <scope>FUNCTION</scope>
    <scope>INDUCTION</scope>
</reference>
<reference key="3">
    <citation type="journal article" date="2017" name="Environ. Microbiol.">
        <title>Production of a fungal furocoumarin by a polyketide synthase gene cluster confers the chemo-resistance of Neurospora crassa to the predation by fungivorous arthropods.</title>
        <authorList>
            <person name="Zhao Y."/>
            <person name="Ding J."/>
            <person name="Yuan W."/>
            <person name="Huang J."/>
            <person name="Huang W."/>
            <person name="Wang Y."/>
            <person name="Zheng W."/>
        </authorList>
    </citation>
    <scope>FUNCTION</scope>
    <scope>INDUCTION</scope>
</reference>
<reference key="4">
    <citation type="journal article" date="2019" name="J. Nat. Prod.">
        <title>Genome mining reveals Neurospora crassa can produce the salicylaldehyde sordarial.</title>
        <authorList>
            <person name="Zhao Z."/>
            <person name="Ying Y."/>
            <person name="Hung Y.S."/>
            <person name="Tang Y."/>
        </authorList>
    </citation>
    <scope>FUNCTION</scope>
    <scope>PATHWAY</scope>
</reference>
<protein>
    <recommendedName>
        <fullName evidence="5">Cupin-domain-containing oxidoreductase srdB</fullName>
        <ecNumber evidence="7">1.-.-.-</ecNumber>
    </recommendedName>
    <alternativeName>
        <fullName evidence="5">Sordarial biosynthesis cluster protein srdB</fullName>
    </alternativeName>
</protein>
<feature type="chain" id="PRO_0000449330" description="Cupin-domain-containing oxidoreductase srdB">
    <location>
        <begin position="1"/>
        <end position="196"/>
    </location>
</feature>
<feature type="domain" description="Cupin type-2" evidence="1">
    <location>
        <begin position="92"/>
        <end position="156"/>
    </location>
</feature>
<accession>Q7SHI5</accession>
<evidence type="ECO:0000255" key="1"/>
<evidence type="ECO:0000269" key="2">
    <source>
    </source>
</evidence>
<evidence type="ECO:0000269" key="3">
    <source>
    </source>
</evidence>
<evidence type="ECO:0000269" key="4">
    <source>
    </source>
</evidence>
<evidence type="ECO:0000303" key="5">
    <source>
    </source>
</evidence>
<evidence type="ECO:0000305" key="6"/>
<evidence type="ECO:0000305" key="7">
    <source>
    </source>
</evidence>